<organism>
    <name type="scientific">Escherichia coli (strain K12)</name>
    <dbReference type="NCBI Taxonomy" id="83333"/>
    <lineage>
        <taxon>Bacteria</taxon>
        <taxon>Pseudomonadati</taxon>
        <taxon>Pseudomonadota</taxon>
        <taxon>Gammaproteobacteria</taxon>
        <taxon>Enterobacterales</taxon>
        <taxon>Enterobacteriaceae</taxon>
        <taxon>Escherichia</taxon>
    </lineage>
</organism>
<evidence type="ECO:0000255" key="1">
    <source>
        <dbReference type="PROSITE-ProRule" id="PRU00111"/>
    </source>
</evidence>
<evidence type="ECO:0000305" key="2"/>
<evidence type="ECO:0007829" key="3">
    <source>
        <dbReference type="PDB" id="3BRQ"/>
    </source>
</evidence>
<reference key="1">
    <citation type="journal article" date="1992" name="Mol. Biol. Evol.">
        <title>Nucleotide sequence, function, activation, and evolution of the cryptic asc operon of Escherichia coli K12.</title>
        <authorList>
            <person name="Hall B.G."/>
            <person name="Xu L."/>
        </authorList>
    </citation>
    <scope>NUCLEOTIDE SEQUENCE [GENOMIC DNA]</scope>
    <source>
        <strain>K12</strain>
    </source>
</reference>
<reference key="2">
    <citation type="journal article" date="1997" name="Science">
        <title>The complete genome sequence of Escherichia coli K-12.</title>
        <authorList>
            <person name="Blattner F.R."/>
            <person name="Plunkett G. III"/>
            <person name="Bloch C.A."/>
            <person name="Perna N.T."/>
            <person name="Burland V."/>
            <person name="Riley M."/>
            <person name="Collado-Vides J."/>
            <person name="Glasner J.D."/>
            <person name="Rode C.K."/>
            <person name="Mayhew G.F."/>
            <person name="Gregor J."/>
            <person name="Davis N.W."/>
            <person name="Kirkpatrick H.A."/>
            <person name="Goeden M.A."/>
            <person name="Rose D.J."/>
            <person name="Mau B."/>
            <person name="Shao Y."/>
        </authorList>
    </citation>
    <scope>NUCLEOTIDE SEQUENCE [LARGE SCALE GENOMIC DNA]</scope>
    <source>
        <strain>K12 / MG1655 / ATCC 47076</strain>
    </source>
</reference>
<reference key="3">
    <citation type="journal article" date="2006" name="Mol. Syst. Biol.">
        <title>Highly accurate genome sequences of Escherichia coli K-12 strains MG1655 and W3110.</title>
        <authorList>
            <person name="Hayashi K."/>
            <person name="Morooka N."/>
            <person name="Yamamoto Y."/>
            <person name="Fujita K."/>
            <person name="Isono K."/>
            <person name="Choi S."/>
            <person name="Ohtsubo E."/>
            <person name="Baba T."/>
            <person name="Wanner B.L."/>
            <person name="Mori H."/>
            <person name="Horiuchi T."/>
        </authorList>
    </citation>
    <scope>NUCLEOTIDE SEQUENCE [LARGE SCALE GENOMIC DNA]</scope>
    <source>
        <strain>K12 / W3110 / ATCC 27325 / DSM 5911</strain>
    </source>
</reference>
<feature type="chain" id="PRO_0000107923" description="HTH-type transcriptional regulator AscG">
    <location>
        <begin position="1"/>
        <end position="336"/>
    </location>
</feature>
<feature type="domain" description="HTH lacI-type" evidence="1">
    <location>
        <begin position="2"/>
        <end position="56"/>
    </location>
</feature>
<feature type="DNA-binding region" description="H-T-H motif" evidence="1">
    <location>
        <begin position="4"/>
        <end position="23"/>
    </location>
</feature>
<feature type="sequence conflict" description="In Ref. 1; AAA16428." evidence="2" ref="1">
    <original>QHGIALNEKLIANGKWTPASGAEG</original>
    <variation>SMVLRSMKNLSLTVNGRLPAGRR</variation>
    <location>
        <begin position="207"/>
        <end position="230"/>
    </location>
</feature>
<feature type="strand" evidence="3">
    <location>
        <begin position="61"/>
        <end position="66"/>
    </location>
</feature>
<feature type="helix" evidence="3">
    <location>
        <begin position="68"/>
        <end position="70"/>
    </location>
</feature>
<feature type="helix" evidence="3">
    <location>
        <begin position="76"/>
        <end position="89"/>
    </location>
</feature>
<feature type="strand" evidence="3">
    <location>
        <begin position="93"/>
        <end position="97"/>
    </location>
</feature>
<feature type="helix" evidence="3">
    <location>
        <begin position="103"/>
        <end position="115"/>
    </location>
</feature>
<feature type="strand" evidence="3">
    <location>
        <begin position="119"/>
        <end position="124"/>
    </location>
</feature>
<feature type="strand" evidence="3">
    <location>
        <begin position="126"/>
        <end position="128"/>
    </location>
</feature>
<feature type="helix" evidence="3">
    <location>
        <begin position="130"/>
        <end position="138"/>
    </location>
</feature>
<feature type="strand" evidence="3">
    <location>
        <begin position="144"/>
        <end position="148"/>
    </location>
</feature>
<feature type="strand" evidence="3">
    <location>
        <begin position="152"/>
        <end position="154"/>
    </location>
</feature>
<feature type="helix" evidence="3">
    <location>
        <begin position="155"/>
        <end position="157"/>
    </location>
</feature>
<feature type="helix" evidence="3">
    <location>
        <begin position="163"/>
        <end position="176"/>
    </location>
</feature>
<feature type="strand" evidence="3">
    <location>
        <begin position="181"/>
        <end position="185"/>
    </location>
</feature>
<feature type="helix" evidence="3">
    <location>
        <begin position="192"/>
        <end position="206"/>
    </location>
</feature>
<feature type="turn" evidence="3">
    <location>
        <begin position="207"/>
        <end position="209"/>
    </location>
</feature>
<feature type="helix" evidence="3">
    <location>
        <begin position="214"/>
        <end position="216"/>
    </location>
</feature>
<feature type="helix" evidence="3">
    <location>
        <begin position="224"/>
        <end position="235"/>
    </location>
</feature>
<feature type="strand" evidence="3">
    <location>
        <begin position="242"/>
        <end position="248"/>
    </location>
</feature>
<feature type="helix" evidence="3">
    <location>
        <begin position="249"/>
        <end position="262"/>
    </location>
</feature>
<feature type="turn" evidence="3">
    <location>
        <begin position="266"/>
        <end position="269"/>
    </location>
</feature>
<feature type="strand" evidence="3">
    <location>
        <begin position="271"/>
        <end position="276"/>
    </location>
</feature>
<feature type="helix" evidence="3">
    <location>
        <begin position="281"/>
        <end position="283"/>
    </location>
</feature>
<feature type="strand" evidence="3">
    <location>
        <begin position="284"/>
        <end position="286"/>
    </location>
</feature>
<feature type="strand" evidence="3">
    <location>
        <begin position="289"/>
        <end position="292"/>
    </location>
</feature>
<feature type="helix" evidence="3">
    <location>
        <begin position="295"/>
        <end position="310"/>
    </location>
</feature>
<feature type="strand" evidence="3">
    <location>
        <begin position="324"/>
        <end position="326"/>
    </location>
</feature>
<proteinExistence type="evidence at protein level"/>
<accession>P24242</accession>
<accession>Q2MAB5</accession>
<accession>Q46879</accession>
<comment type="function">
    <text>Repressor of the asc operon. The cryptic operon is activated by the insertion of IS186 into the ascG gene.</text>
</comment>
<comment type="sequence caution" evidence="2">
    <conflict type="erroneous initiation">
        <sequence resource="EMBL-CDS" id="AAA16428"/>
    </conflict>
    <text>Extended N-terminus.</text>
</comment>
<comment type="sequence caution" evidence="2">
    <conflict type="erroneous initiation">
        <sequence resource="EMBL-CDS" id="AAA69224"/>
    </conflict>
    <text>Extended N-terminus.</text>
</comment>
<comment type="sequence caution" evidence="2">
    <conflict type="erroneous initiation">
        <sequence resource="EMBL-CDS" id="BAE76791"/>
    </conflict>
    <text>Extended N-terminus.</text>
</comment>
<name>ASCG_ECOLI</name>
<gene>
    <name type="primary">ascG</name>
    <name type="ordered locus">b2714</name>
    <name type="ordered locus">JW5434</name>
</gene>
<keyword id="KW-0002">3D-structure</keyword>
<keyword id="KW-0238">DNA-binding</keyword>
<keyword id="KW-1185">Reference proteome</keyword>
<keyword id="KW-0678">Repressor</keyword>
<keyword id="KW-0804">Transcription</keyword>
<keyword id="KW-0805">Transcription regulation</keyword>
<protein>
    <recommendedName>
        <fullName>HTH-type transcriptional regulator AscG</fullName>
    </recommendedName>
    <alternativeName>
        <fullName>Cryptic asc operon repressor</fullName>
    </alternativeName>
</protein>
<dbReference type="EMBL" id="M73326">
    <property type="protein sequence ID" value="AAA16428.1"/>
    <property type="status" value="ALT_INIT"/>
    <property type="molecule type" value="Unassigned_DNA"/>
</dbReference>
<dbReference type="EMBL" id="U29579">
    <property type="protein sequence ID" value="AAA69224.1"/>
    <property type="status" value="ALT_INIT"/>
    <property type="molecule type" value="Genomic_DNA"/>
</dbReference>
<dbReference type="EMBL" id="U00096">
    <property type="protein sequence ID" value="AAC75756.2"/>
    <property type="molecule type" value="Genomic_DNA"/>
</dbReference>
<dbReference type="EMBL" id="AP009048">
    <property type="protein sequence ID" value="BAE76791.1"/>
    <property type="status" value="ALT_INIT"/>
    <property type="molecule type" value="Genomic_DNA"/>
</dbReference>
<dbReference type="PIR" id="F65051">
    <property type="entry name" value="F65051"/>
</dbReference>
<dbReference type="RefSeq" id="NP_417194.2">
    <property type="nucleotide sequence ID" value="NC_000913.3"/>
</dbReference>
<dbReference type="RefSeq" id="WP_001394680.1">
    <property type="nucleotide sequence ID" value="NZ_LN832404.1"/>
</dbReference>
<dbReference type="PDB" id="3BRQ">
    <property type="method" value="X-ray"/>
    <property type="resolution" value="2.00 A"/>
    <property type="chains" value="A/B=43-336"/>
</dbReference>
<dbReference type="PDB" id="3DBI">
    <property type="method" value="X-ray"/>
    <property type="resolution" value="2.45 A"/>
    <property type="chains" value="A/B/C=2-336"/>
</dbReference>
<dbReference type="PDBsum" id="3BRQ"/>
<dbReference type="PDBsum" id="3DBI"/>
<dbReference type="SMR" id="P24242"/>
<dbReference type="BioGRID" id="4259426">
    <property type="interactions" value="109"/>
</dbReference>
<dbReference type="BioGRID" id="851633">
    <property type="interactions" value="15"/>
</dbReference>
<dbReference type="FunCoup" id="P24242">
    <property type="interactions" value="34"/>
</dbReference>
<dbReference type="IntAct" id="P24242">
    <property type="interactions" value="14"/>
</dbReference>
<dbReference type="STRING" id="511145.b2714"/>
<dbReference type="jPOST" id="P24242"/>
<dbReference type="PaxDb" id="511145-b2714"/>
<dbReference type="EnsemblBacteria" id="AAC75756">
    <property type="protein sequence ID" value="AAC75756"/>
    <property type="gene ID" value="b2714"/>
</dbReference>
<dbReference type="GeneID" id="947305"/>
<dbReference type="KEGG" id="ecj:JW5434"/>
<dbReference type="KEGG" id="eco:b2714"/>
<dbReference type="KEGG" id="ecoc:C3026_14935"/>
<dbReference type="PATRIC" id="fig|511145.12.peg.2806"/>
<dbReference type="EchoBASE" id="EB0085"/>
<dbReference type="eggNOG" id="COG1609">
    <property type="taxonomic scope" value="Bacteria"/>
</dbReference>
<dbReference type="HOGENOM" id="CLU_037628_6_0_6"/>
<dbReference type="InParanoid" id="P24242"/>
<dbReference type="OMA" id="ADPFYGP"/>
<dbReference type="PhylomeDB" id="P24242"/>
<dbReference type="BioCyc" id="EcoCyc:EG10087-MONOMER"/>
<dbReference type="EvolutionaryTrace" id="P24242"/>
<dbReference type="PRO" id="PR:P24242"/>
<dbReference type="Proteomes" id="UP000000625">
    <property type="component" value="Chromosome"/>
</dbReference>
<dbReference type="GO" id="GO:0003700">
    <property type="term" value="F:DNA-binding transcription factor activity"/>
    <property type="evidence" value="ECO:0000314"/>
    <property type="project" value="EcoCyc"/>
</dbReference>
<dbReference type="GO" id="GO:0043565">
    <property type="term" value="F:sequence-specific DNA binding"/>
    <property type="evidence" value="ECO:0000314"/>
    <property type="project" value="EcoCyc"/>
</dbReference>
<dbReference type="GO" id="GO:0000976">
    <property type="term" value="F:transcription cis-regulatory region binding"/>
    <property type="evidence" value="ECO:0000318"/>
    <property type="project" value="GO_Central"/>
</dbReference>
<dbReference type="GO" id="GO:0006351">
    <property type="term" value="P:DNA-templated transcription"/>
    <property type="evidence" value="ECO:0000270"/>
    <property type="project" value="EcoCyc"/>
</dbReference>
<dbReference type="GO" id="GO:0045892">
    <property type="term" value="P:negative regulation of DNA-templated transcription"/>
    <property type="evidence" value="ECO:0000314"/>
    <property type="project" value="EcoCyc"/>
</dbReference>
<dbReference type="GO" id="GO:0006355">
    <property type="term" value="P:regulation of DNA-templated transcription"/>
    <property type="evidence" value="ECO:0000318"/>
    <property type="project" value="GO_Central"/>
</dbReference>
<dbReference type="CDD" id="cd01392">
    <property type="entry name" value="HTH_LacI"/>
    <property type="match status" value="1"/>
</dbReference>
<dbReference type="CDD" id="cd06270">
    <property type="entry name" value="PBP1_GalS-like"/>
    <property type="match status" value="1"/>
</dbReference>
<dbReference type="FunFam" id="1.10.260.40:FF:000041">
    <property type="entry name" value="Asc operon transcriptional repressor"/>
    <property type="match status" value="1"/>
</dbReference>
<dbReference type="Gene3D" id="3.40.50.2300">
    <property type="match status" value="2"/>
</dbReference>
<dbReference type="Gene3D" id="1.10.260.40">
    <property type="entry name" value="lambda repressor-like DNA-binding domains"/>
    <property type="match status" value="1"/>
</dbReference>
<dbReference type="InterPro" id="IPR001387">
    <property type="entry name" value="Cro/C1-type_HTH"/>
</dbReference>
<dbReference type="InterPro" id="IPR000843">
    <property type="entry name" value="HTH_LacI"/>
</dbReference>
<dbReference type="InterPro" id="IPR046335">
    <property type="entry name" value="LacI/GalR-like_sensor"/>
</dbReference>
<dbReference type="InterPro" id="IPR010982">
    <property type="entry name" value="Lambda_DNA-bd_dom_sf"/>
</dbReference>
<dbReference type="InterPro" id="IPR028082">
    <property type="entry name" value="Peripla_BP_I"/>
</dbReference>
<dbReference type="PANTHER" id="PTHR30146:SF67">
    <property type="entry name" value="HTH-TYPE TRANSCRIPTIONAL REGULATOR ASCG"/>
    <property type="match status" value="1"/>
</dbReference>
<dbReference type="PANTHER" id="PTHR30146">
    <property type="entry name" value="LACI-RELATED TRANSCRIPTIONAL REPRESSOR"/>
    <property type="match status" value="1"/>
</dbReference>
<dbReference type="Pfam" id="PF00356">
    <property type="entry name" value="LacI"/>
    <property type="match status" value="1"/>
</dbReference>
<dbReference type="Pfam" id="PF13377">
    <property type="entry name" value="Peripla_BP_3"/>
    <property type="match status" value="1"/>
</dbReference>
<dbReference type="SMART" id="SM00354">
    <property type="entry name" value="HTH_LACI"/>
    <property type="match status" value="1"/>
</dbReference>
<dbReference type="SUPFAM" id="SSF47413">
    <property type="entry name" value="lambda repressor-like DNA-binding domains"/>
    <property type="match status" value="1"/>
</dbReference>
<dbReference type="SUPFAM" id="SSF53822">
    <property type="entry name" value="Periplasmic binding protein-like I"/>
    <property type="match status" value="1"/>
</dbReference>
<dbReference type="PROSITE" id="PS00356">
    <property type="entry name" value="HTH_LACI_1"/>
    <property type="match status" value="1"/>
</dbReference>
<dbReference type="PROSITE" id="PS50932">
    <property type="entry name" value="HTH_LACI_2"/>
    <property type="match status" value="1"/>
</dbReference>
<sequence>MTTMLEVAKRAGVSKATVSRVLSGNGYVSQETKDRVFQAVEESGYRPNLLARNLSAKSTQTLGLVVTNTLYHGIYFSELLFHAARMAEEKGRQLLLADGKHSAEEERQAIQYLLDLRCDAIMIYPRFLSVDEIDDIIDAHSQPIMVLNRRLRKNSSHSVWCDHKQTSFNAVAELINAGHQEIAFLTGSMDSPTSIERLAGYKDALAQHGIALNEKLIANGKWTPASGAEGVEMLLERGAKFSALVASNDDMAIGAMKALHERGVAVPEQVSVIGFDDIAIAPYTVPALSSVKIPVTEMIQEIIGRLIFMLDGGDFSPPKTFSGKLIRRDSLIAPSR</sequence>